<proteinExistence type="inferred from homology"/>
<dbReference type="EC" id="4.2.3.4" evidence="1"/>
<dbReference type="EMBL" id="CP001344">
    <property type="protein sequence ID" value="ACL45874.1"/>
    <property type="molecule type" value="Genomic_DNA"/>
</dbReference>
<dbReference type="SMR" id="B8HRK7"/>
<dbReference type="STRING" id="395961.Cyan7425_3553"/>
<dbReference type="KEGG" id="cyn:Cyan7425_3553"/>
<dbReference type="eggNOG" id="COG0337">
    <property type="taxonomic scope" value="Bacteria"/>
</dbReference>
<dbReference type="HOGENOM" id="CLU_001201_0_2_3"/>
<dbReference type="OrthoDB" id="9806583at2"/>
<dbReference type="UniPathway" id="UPA00053">
    <property type="reaction ID" value="UER00085"/>
</dbReference>
<dbReference type="GO" id="GO:0005737">
    <property type="term" value="C:cytoplasm"/>
    <property type="evidence" value="ECO:0007669"/>
    <property type="project" value="UniProtKB-SubCell"/>
</dbReference>
<dbReference type="GO" id="GO:0003856">
    <property type="term" value="F:3-dehydroquinate synthase activity"/>
    <property type="evidence" value="ECO:0007669"/>
    <property type="project" value="UniProtKB-UniRule"/>
</dbReference>
<dbReference type="GO" id="GO:0046872">
    <property type="term" value="F:metal ion binding"/>
    <property type="evidence" value="ECO:0007669"/>
    <property type="project" value="UniProtKB-KW"/>
</dbReference>
<dbReference type="GO" id="GO:0000166">
    <property type="term" value="F:nucleotide binding"/>
    <property type="evidence" value="ECO:0007669"/>
    <property type="project" value="UniProtKB-KW"/>
</dbReference>
<dbReference type="GO" id="GO:0008652">
    <property type="term" value="P:amino acid biosynthetic process"/>
    <property type="evidence" value="ECO:0007669"/>
    <property type="project" value="UniProtKB-KW"/>
</dbReference>
<dbReference type="GO" id="GO:0009073">
    <property type="term" value="P:aromatic amino acid family biosynthetic process"/>
    <property type="evidence" value="ECO:0007669"/>
    <property type="project" value="UniProtKB-KW"/>
</dbReference>
<dbReference type="GO" id="GO:0009423">
    <property type="term" value="P:chorismate biosynthetic process"/>
    <property type="evidence" value="ECO:0007669"/>
    <property type="project" value="UniProtKB-UniRule"/>
</dbReference>
<dbReference type="CDD" id="cd08195">
    <property type="entry name" value="DHQS"/>
    <property type="match status" value="1"/>
</dbReference>
<dbReference type="FunFam" id="3.40.50.1970:FF:000001">
    <property type="entry name" value="3-dehydroquinate synthase"/>
    <property type="match status" value="1"/>
</dbReference>
<dbReference type="Gene3D" id="3.40.50.1970">
    <property type="match status" value="1"/>
</dbReference>
<dbReference type="Gene3D" id="1.20.1090.10">
    <property type="entry name" value="Dehydroquinate synthase-like - alpha domain"/>
    <property type="match status" value="1"/>
</dbReference>
<dbReference type="HAMAP" id="MF_00110">
    <property type="entry name" value="DHQ_synthase"/>
    <property type="match status" value="1"/>
</dbReference>
<dbReference type="InterPro" id="IPR050071">
    <property type="entry name" value="Dehydroquinate_synthase"/>
</dbReference>
<dbReference type="InterPro" id="IPR016037">
    <property type="entry name" value="DHQ_synth_AroB"/>
</dbReference>
<dbReference type="InterPro" id="IPR030963">
    <property type="entry name" value="DHQ_synth_fam"/>
</dbReference>
<dbReference type="InterPro" id="IPR030960">
    <property type="entry name" value="DHQS/DOIS_N"/>
</dbReference>
<dbReference type="InterPro" id="IPR056179">
    <property type="entry name" value="DHQS_C"/>
</dbReference>
<dbReference type="NCBIfam" id="TIGR01357">
    <property type="entry name" value="aroB"/>
    <property type="match status" value="1"/>
</dbReference>
<dbReference type="PANTHER" id="PTHR43622">
    <property type="entry name" value="3-DEHYDROQUINATE SYNTHASE"/>
    <property type="match status" value="1"/>
</dbReference>
<dbReference type="PANTHER" id="PTHR43622:SF7">
    <property type="entry name" value="3-DEHYDROQUINATE SYNTHASE, CHLOROPLASTIC"/>
    <property type="match status" value="1"/>
</dbReference>
<dbReference type="Pfam" id="PF01761">
    <property type="entry name" value="DHQ_synthase"/>
    <property type="match status" value="1"/>
</dbReference>
<dbReference type="Pfam" id="PF24621">
    <property type="entry name" value="DHQS_C"/>
    <property type="match status" value="1"/>
</dbReference>
<dbReference type="PIRSF" id="PIRSF001455">
    <property type="entry name" value="DHQ_synth"/>
    <property type="match status" value="1"/>
</dbReference>
<dbReference type="SUPFAM" id="SSF56796">
    <property type="entry name" value="Dehydroquinate synthase-like"/>
    <property type="match status" value="1"/>
</dbReference>
<sequence length="369" mass="40113">MEKVIPVHLPHQSYAVVIASGGLGQMGDYLQHQAHLKPGQKVLVVSNPLIFKHYGEKVLVSLQRAGFATSTCLLPAGERYKTLKSVQQIYDCALEQRLERSSTILALGGGVIGDMAGFAAATWLRGINVVQVPTTLLAMVDAAIGGKTGVNHPQGKNLIGAFHQPRLVLIDPDTLKTLPGREFRAALAEVIKYGVIWDGNLFQKLEAAERLDQYRTLSPQLLADLLVHSCQAKVDVVTKDEKEAGLRAILNYGHTIGHGIESLTNYRKFNHGEAVGLGMVAVGQLAVDLGFWSQEECDRQFSLIQKAHLPTHIPADLDLNLLIDSLQTDKKVQAGQVRFIVPTAIGAVTITDQIPTPAIVHVLKQMQKG</sequence>
<gene>
    <name evidence="1" type="primary">aroB</name>
    <name type="ordered locus">Cyan7425_3553</name>
</gene>
<organism>
    <name type="scientific">Cyanothece sp. (strain PCC 7425 / ATCC 29141)</name>
    <dbReference type="NCBI Taxonomy" id="395961"/>
    <lineage>
        <taxon>Bacteria</taxon>
        <taxon>Bacillati</taxon>
        <taxon>Cyanobacteriota</taxon>
        <taxon>Cyanophyceae</taxon>
        <taxon>Gomontiellales</taxon>
        <taxon>Cyanothecaceae</taxon>
        <taxon>Cyanothece</taxon>
    </lineage>
</organism>
<accession>B8HRK7</accession>
<keyword id="KW-0028">Amino-acid biosynthesis</keyword>
<keyword id="KW-0057">Aromatic amino acid biosynthesis</keyword>
<keyword id="KW-0170">Cobalt</keyword>
<keyword id="KW-0963">Cytoplasm</keyword>
<keyword id="KW-0456">Lyase</keyword>
<keyword id="KW-0479">Metal-binding</keyword>
<keyword id="KW-0520">NAD</keyword>
<keyword id="KW-0547">Nucleotide-binding</keyword>
<keyword id="KW-0862">Zinc</keyword>
<feature type="chain" id="PRO_1000119079" description="3-dehydroquinate synthase">
    <location>
        <begin position="1"/>
        <end position="369"/>
    </location>
</feature>
<feature type="binding site" evidence="1">
    <location>
        <begin position="110"/>
        <end position="114"/>
    </location>
    <ligand>
        <name>NAD(+)</name>
        <dbReference type="ChEBI" id="CHEBI:57540"/>
    </ligand>
</feature>
<feature type="binding site" evidence="1">
    <location>
        <begin position="134"/>
        <end position="135"/>
    </location>
    <ligand>
        <name>NAD(+)</name>
        <dbReference type="ChEBI" id="CHEBI:57540"/>
    </ligand>
</feature>
<feature type="binding site" evidence="1">
    <location>
        <position position="147"/>
    </location>
    <ligand>
        <name>NAD(+)</name>
        <dbReference type="ChEBI" id="CHEBI:57540"/>
    </ligand>
</feature>
<feature type="binding site" evidence="1">
    <location>
        <position position="156"/>
    </location>
    <ligand>
        <name>NAD(+)</name>
        <dbReference type="ChEBI" id="CHEBI:57540"/>
    </ligand>
</feature>
<feature type="binding site" evidence="1">
    <location>
        <begin position="174"/>
        <end position="177"/>
    </location>
    <ligand>
        <name>NAD(+)</name>
        <dbReference type="ChEBI" id="CHEBI:57540"/>
    </ligand>
</feature>
<feature type="binding site" evidence="1">
    <location>
        <position position="189"/>
    </location>
    <ligand>
        <name>Zn(2+)</name>
        <dbReference type="ChEBI" id="CHEBI:29105"/>
    </ligand>
</feature>
<feature type="binding site" evidence="1">
    <location>
        <position position="254"/>
    </location>
    <ligand>
        <name>Zn(2+)</name>
        <dbReference type="ChEBI" id="CHEBI:29105"/>
    </ligand>
</feature>
<feature type="binding site" evidence="1">
    <location>
        <position position="271"/>
    </location>
    <ligand>
        <name>Zn(2+)</name>
        <dbReference type="ChEBI" id="CHEBI:29105"/>
    </ligand>
</feature>
<reference key="1">
    <citation type="journal article" date="2011" name="MBio">
        <title>Novel metabolic attributes of the genus Cyanothece, comprising a group of unicellular nitrogen-fixing Cyanobacteria.</title>
        <authorList>
            <person name="Bandyopadhyay A."/>
            <person name="Elvitigala T."/>
            <person name="Welsh E."/>
            <person name="Stockel J."/>
            <person name="Liberton M."/>
            <person name="Min H."/>
            <person name="Sherman L.A."/>
            <person name="Pakrasi H.B."/>
        </authorList>
    </citation>
    <scope>NUCLEOTIDE SEQUENCE [LARGE SCALE GENOMIC DNA]</scope>
    <source>
        <strain>PCC 7425 / ATCC 29141</strain>
    </source>
</reference>
<comment type="function">
    <text evidence="1">Catalyzes the conversion of 3-deoxy-D-arabino-heptulosonate 7-phosphate (DAHP) to dehydroquinate (DHQ).</text>
</comment>
<comment type="catalytic activity">
    <reaction evidence="1">
        <text>7-phospho-2-dehydro-3-deoxy-D-arabino-heptonate = 3-dehydroquinate + phosphate</text>
        <dbReference type="Rhea" id="RHEA:21968"/>
        <dbReference type="ChEBI" id="CHEBI:32364"/>
        <dbReference type="ChEBI" id="CHEBI:43474"/>
        <dbReference type="ChEBI" id="CHEBI:58394"/>
        <dbReference type="EC" id="4.2.3.4"/>
    </reaction>
</comment>
<comment type="cofactor">
    <cofactor evidence="1">
        <name>Co(2+)</name>
        <dbReference type="ChEBI" id="CHEBI:48828"/>
    </cofactor>
    <cofactor evidence="1">
        <name>Zn(2+)</name>
        <dbReference type="ChEBI" id="CHEBI:29105"/>
    </cofactor>
    <text evidence="1">Binds 1 divalent metal cation per subunit. Can use either Co(2+) or Zn(2+).</text>
</comment>
<comment type="cofactor">
    <cofactor evidence="1">
        <name>NAD(+)</name>
        <dbReference type="ChEBI" id="CHEBI:57540"/>
    </cofactor>
</comment>
<comment type="pathway">
    <text evidence="1">Metabolic intermediate biosynthesis; chorismate biosynthesis; chorismate from D-erythrose 4-phosphate and phosphoenolpyruvate: step 2/7.</text>
</comment>
<comment type="subcellular location">
    <subcellularLocation>
        <location evidence="1">Cytoplasm</location>
    </subcellularLocation>
</comment>
<comment type="similarity">
    <text evidence="1">Belongs to the sugar phosphate cyclases superfamily. Dehydroquinate synthase family.</text>
</comment>
<protein>
    <recommendedName>
        <fullName evidence="1">3-dehydroquinate synthase</fullName>
        <shortName evidence="1">DHQS</shortName>
        <ecNumber evidence="1">4.2.3.4</ecNumber>
    </recommendedName>
</protein>
<name>AROB_CYAP4</name>
<evidence type="ECO:0000255" key="1">
    <source>
        <dbReference type="HAMAP-Rule" id="MF_00110"/>
    </source>
</evidence>